<organism>
    <name type="scientific">Staphylococcus aureus (strain Mu3 / ATCC 700698)</name>
    <dbReference type="NCBI Taxonomy" id="418127"/>
    <lineage>
        <taxon>Bacteria</taxon>
        <taxon>Bacillati</taxon>
        <taxon>Bacillota</taxon>
        <taxon>Bacilli</taxon>
        <taxon>Bacillales</taxon>
        <taxon>Staphylococcaceae</taxon>
        <taxon>Staphylococcus</taxon>
    </lineage>
</organism>
<evidence type="ECO:0000255" key="1">
    <source>
        <dbReference type="HAMAP-Rule" id="MF_01808"/>
    </source>
</evidence>
<evidence type="ECO:0000255" key="2">
    <source>
        <dbReference type="PROSITE-ProRule" id="PRU01246"/>
    </source>
</evidence>
<evidence type="ECO:0000255" key="3">
    <source>
        <dbReference type="PROSITE-ProRule" id="PRU01248"/>
    </source>
</evidence>
<accession>A7X1M7</accession>
<reference key="1">
    <citation type="journal article" date="2008" name="Antimicrob. Agents Chemother.">
        <title>Mutated response regulator graR is responsible for phenotypic conversion of Staphylococcus aureus from heterogeneous vancomycin-intermediate resistance to vancomycin-intermediate resistance.</title>
        <authorList>
            <person name="Neoh H.-M."/>
            <person name="Cui L."/>
            <person name="Yuzawa H."/>
            <person name="Takeuchi F."/>
            <person name="Matsuo M."/>
            <person name="Hiramatsu K."/>
        </authorList>
    </citation>
    <scope>NUCLEOTIDE SEQUENCE [LARGE SCALE GENOMIC DNA]</scope>
    <source>
        <strain>Mu3 / ATCC 700698</strain>
    </source>
</reference>
<gene>
    <name evidence="1" type="primary">xerC</name>
    <name type="ordered locus">SAHV_1242</name>
</gene>
<comment type="function">
    <text evidence="1">Site-specific tyrosine recombinase, which acts by catalyzing the cutting and rejoining of the recombining DNA molecules. The XerC-XerD complex is essential to convert dimers of the bacterial chromosome into monomers to permit their segregation at cell division. It also contributes to the segregational stability of plasmids.</text>
</comment>
<comment type="subunit">
    <text evidence="1">Forms a cyclic heterotetrameric complex composed of two molecules of XerC and two molecules of XerD.</text>
</comment>
<comment type="subcellular location">
    <subcellularLocation>
        <location evidence="1">Cytoplasm</location>
    </subcellularLocation>
</comment>
<comment type="similarity">
    <text evidence="1">Belongs to the 'phage' integrase family. XerC subfamily.</text>
</comment>
<feature type="chain" id="PRO_1000070043" description="Tyrosine recombinase XerC">
    <location>
        <begin position="1"/>
        <end position="298"/>
    </location>
</feature>
<feature type="domain" description="Core-binding (CB)" evidence="3">
    <location>
        <begin position="1"/>
        <end position="84"/>
    </location>
</feature>
<feature type="domain" description="Tyr recombinase" evidence="2">
    <location>
        <begin position="105"/>
        <end position="286"/>
    </location>
</feature>
<feature type="active site" evidence="1">
    <location>
        <position position="145"/>
    </location>
</feature>
<feature type="active site" evidence="1">
    <location>
        <position position="169"/>
    </location>
</feature>
<feature type="active site" evidence="1">
    <location>
        <position position="238"/>
    </location>
</feature>
<feature type="active site" evidence="1">
    <location>
        <position position="241"/>
    </location>
</feature>
<feature type="active site" evidence="1">
    <location>
        <position position="264"/>
    </location>
</feature>
<feature type="active site" description="O-(3'-phospho-DNA)-tyrosine intermediate" evidence="1">
    <location>
        <position position="273"/>
    </location>
</feature>
<sequence>MNHIQEAFLNTLKVERNFSEHTLKSYQDDLIQFNQFLEQEHLQLKTFEYRDARNYLSYLYSNHLKRTSVSRKISTLRTFYEYWMTLDENIINPFVQLVHPKKEKYLPQFFYEEEMEALFKTVEEDTSKNLRDRVILELLYATGIRVSELVNIKKQDIDFYANGVTVLGKGSKERFVPFGAYCRQSIENYLEHFKPIQSCNHDFLILNMKGEAITERGVRYVLNDIVKRTAGVSEIHPHKLRHTFATHLLNQGADLRTVQSLLGHVNLSTTGKYTHVSNQQLRKVYLNAHPRAKKENET</sequence>
<protein>
    <recommendedName>
        <fullName evidence="1">Tyrosine recombinase XerC</fullName>
    </recommendedName>
</protein>
<keyword id="KW-0131">Cell cycle</keyword>
<keyword id="KW-0132">Cell division</keyword>
<keyword id="KW-0159">Chromosome partition</keyword>
<keyword id="KW-0963">Cytoplasm</keyword>
<keyword id="KW-0229">DNA integration</keyword>
<keyword id="KW-0233">DNA recombination</keyword>
<keyword id="KW-0238">DNA-binding</keyword>
<dbReference type="EMBL" id="AP009324">
    <property type="protein sequence ID" value="BAF78125.1"/>
    <property type="molecule type" value="Genomic_DNA"/>
</dbReference>
<dbReference type="RefSeq" id="WP_001015601.1">
    <property type="nucleotide sequence ID" value="NC_009782.1"/>
</dbReference>
<dbReference type="SMR" id="A7X1M7"/>
<dbReference type="KEGG" id="saw:SAHV_1242"/>
<dbReference type="HOGENOM" id="CLU_027562_9_0_9"/>
<dbReference type="GO" id="GO:0005737">
    <property type="term" value="C:cytoplasm"/>
    <property type="evidence" value="ECO:0007669"/>
    <property type="project" value="UniProtKB-SubCell"/>
</dbReference>
<dbReference type="GO" id="GO:0003677">
    <property type="term" value="F:DNA binding"/>
    <property type="evidence" value="ECO:0007669"/>
    <property type="project" value="UniProtKB-KW"/>
</dbReference>
<dbReference type="GO" id="GO:0009037">
    <property type="term" value="F:tyrosine-based site-specific recombinase activity"/>
    <property type="evidence" value="ECO:0007669"/>
    <property type="project" value="UniProtKB-UniRule"/>
</dbReference>
<dbReference type="GO" id="GO:0051301">
    <property type="term" value="P:cell division"/>
    <property type="evidence" value="ECO:0007669"/>
    <property type="project" value="UniProtKB-KW"/>
</dbReference>
<dbReference type="GO" id="GO:0007059">
    <property type="term" value="P:chromosome segregation"/>
    <property type="evidence" value="ECO:0007669"/>
    <property type="project" value="UniProtKB-UniRule"/>
</dbReference>
<dbReference type="GO" id="GO:0006313">
    <property type="term" value="P:DNA transposition"/>
    <property type="evidence" value="ECO:0007669"/>
    <property type="project" value="UniProtKB-UniRule"/>
</dbReference>
<dbReference type="CDD" id="cd00798">
    <property type="entry name" value="INT_XerDC_C"/>
    <property type="match status" value="1"/>
</dbReference>
<dbReference type="Gene3D" id="1.10.150.130">
    <property type="match status" value="1"/>
</dbReference>
<dbReference type="Gene3D" id="1.10.443.10">
    <property type="entry name" value="Intergrase catalytic core"/>
    <property type="match status" value="1"/>
</dbReference>
<dbReference type="HAMAP" id="MF_01808">
    <property type="entry name" value="Recomb_XerC_XerD"/>
    <property type="match status" value="1"/>
</dbReference>
<dbReference type="InterPro" id="IPR044068">
    <property type="entry name" value="CB"/>
</dbReference>
<dbReference type="InterPro" id="IPR011010">
    <property type="entry name" value="DNA_brk_join_enz"/>
</dbReference>
<dbReference type="InterPro" id="IPR013762">
    <property type="entry name" value="Integrase-like_cat_sf"/>
</dbReference>
<dbReference type="InterPro" id="IPR002104">
    <property type="entry name" value="Integrase_catalytic"/>
</dbReference>
<dbReference type="InterPro" id="IPR010998">
    <property type="entry name" value="Integrase_recombinase_N"/>
</dbReference>
<dbReference type="InterPro" id="IPR004107">
    <property type="entry name" value="Integrase_SAM-like_N"/>
</dbReference>
<dbReference type="InterPro" id="IPR011931">
    <property type="entry name" value="Recomb_XerC"/>
</dbReference>
<dbReference type="InterPro" id="IPR023009">
    <property type="entry name" value="Tyrosine_recombinase_XerC/XerD"/>
</dbReference>
<dbReference type="InterPro" id="IPR050090">
    <property type="entry name" value="Tyrosine_recombinase_XerCD"/>
</dbReference>
<dbReference type="NCBIfam" id="NF001399">
    <property type="entry name" value="PRK00283.1"/>
    <property type="match status" value="1"/>
</dbReference>
<dbReference type="NCBIfam" id="NF040815">
    <property type="entry name" value="recomb_XerA_Arch"/>
    <property type="match status" value="1"/>
</dbReference>
<dbReference type="NCBIfam" id="TIGR02224">
    <property type="entry name" value="recomb_XerC"/>
    <property type="match status" value="1"/>
</dbReference>
<dbReference type="PANTHER" id="PTHR30349">
    <property type="entry name" value="PHAGE INTEGRASE-RELATED"/>
    <property type="match status" value="1"/>
</dbReference>
<dbReference type="PANTHER" id="PTHR30349:SF77">
    <property type="entry name" value="TYROSINE RECOMBINASE XERC"/>
    <property type="match status" value="1"/>
</dbReference>
<dbReference type="Pfam" id="PF02899">
    <property type="entry name" value="Phage_int_SAM_1"/>
    <property type="match status" value="1"/>
</dbReference>
<dbReference type="Pfam" id="PF00589">
    <property type="entry name" value="Phage_integrase"/>
    <property type="match status" value="1"/>
</dbReference>
<dbReference type="SUPFAM" id="SSF56349">
    <property type="entry name" value="DNA breaking-rejoining enzymes"/>
    <property type="match status" value="1"/>
</dbReference>
<dbReference type="PROSITE" id="PS51900">
    <property type="entry name" value="CB"/>
    <property type="match status" value="1"/>
</dbReference>
<dbReference type="PROSITE" id="PS51898">
    <property type="entry name" value="TYR_RECOMBINASE"/>
    <property type="match status" value="1"/>
</dbReference>
<name>XERC_STAA1</name>
<proteinExistence type="inferred from homology"/>